<reference key="1">
    <citation type="submission" date="1996-02" db="EMBL/GenBank/DDBJ databases">
        <title>Cloning and characterization of the mel-operon from Streptomyces galbus DSM40480.</title>
        <authorList>
            <person name="Wehmeier U.F."/>
            <person name="Brass N."/>
            <person name="Roessler C."/>
            <person name="Piepersberg W."/>
        </authorList>
    </citation>
    <scope>NUCLEOTIDE SEQUENCE [GENOMIC DNA]</scope>
    <source>
        <strain>ATCC 14077 / CBS 700.72 / DSM 40480 / NBRC 13399 / VKM Ac-160</strain>
    </source>
</reference>
<comment type="function">
    <text>This protein may function to deliver copper to tyrosinase.</text>
</comment>
<comment type="PTM">
    <text>Predicted to be exported by the Tat system. The position of the signal peptide cleavage has not been experimentally proven.</text>
</comment>
<comment type="similarity">
    <text evidence="3">Belongs to the melC1 family.</text>
</comment>
<accession>P55046</accession>
<feature type="signal peptide" description="Tat-type signal" evidence="1">
    <location>
        <begin position="1"/>
        <end position="33"/>
    </location>
</feature>
<feature type="chain" id="PRO_0000065705" description="Tyrosinase cofactor">
    <location>
        <begin position="34"/>
        <end position="126"/>
    </location>
</feature>
<feature type="region of interest" description="Disordered" evidence="2">
    <location>
        <begin position="21"/>
        <end position="71"/>
    </location>
</feature>
<feature type="compositionally biased region" description="Low complexity" evidence="2">
    <location>
        <begin position="21"/>
        <end position="34"/>
    </location>
</feature>
<protein>
    <recommendedName>
        <fullName>Tyrosinase cofactor</fullName>
    </recommendedName>
</protein>
<gene>
    <name type="primary">melC1</name>
</gene>
<keyword id="KW-0186">Copper</keyword>
<keyword id="KW-0470">Melanin biosynthesis</keyword>
<keyword id="KW-0732">Signal</keyword>
<evidence type="ECO:0000255" key="1">
    <source>
        <dbReference type="PROSITE-ProRule" id="PRU00648"/>
    </source>
</evidence>
<evidence type="ECO:0000256" key="2">
    <source>
        <dbReference type="SAM" id="MobiDB-lite"/>
    </source>
</evidence>
<evidence type="ECO:0000305" key="3"/>
<dbReference type="EMBL" id="X95705">
    <property type="protein sequence ID" value="CAA65004.1"/>
    <property type="molecule type" value="Genomic_DNA"/>
</dbReference>
<dbReference type="SMR" id="P55046"/>
<dbReference type="GO" id="GO:0005507">
    <property type="term" value="F:copper ion binding"/>
    <property type="evidence" value="ECO:0007669"/>
    <property type="project" value="InterPro"/>
</dbReference>
<dbReference type="GO" id="GO:0042438">
    <property type="term" value="P:melanin biosynthetic process"/>
    <property type="evidence" value="ECO:0007669"/>
    <property type="project" value="UniProtKB-KW"/>
</dbReference>
<dbReference type="Gene3D" id="3.30.1880.10">
    <property type="entry name" value="protein ne1242 domain like"/>
    <property type="match status" value="1"/>
</dbReference>
<dbReference type="InterPro" id="IPR023199">
    <property type="entry name" value="GriE/MELC1_sf"/>
</dbReference>
<dbReference type="InterPro" id="IPR010928">
    <property type="entry name" value="MelC1"/>
</dbReference>
<dbReference type="InterPro" id="IPR006311">
    <property type="entry name" value="TAT_signal"/>
</dbReference>
<dbReference type="NCBIfam" id="NF047833">
    <property type="entry name" value="TyroCdyMelC1"/>
    <property type="match status" value="1"/>
</dbReference>
<dbReference type="Pfam" id="PF06236">
    <property type="entry name" value="MelC1"/>
    <property type="match status" value="1"/>
</dbReference>
<dbReference type="PROSITE" id="PS51318">
    <property type="entry name" value="TAT"/>
    <property type="match status" value="1"/>
</dbReference>
<organism>
    <name type="scientific">Streptomyces galbus</name>
    <dbReference type="NCBI Taxonomy" id="33898"/>
    <lineage>
        <taxon>Bacteria</taxon>
        <taxon>Bacillati</taxon>
        <taxon>Actinomycetota</taxon>
        <taxon>Actinomycetes</taxon>
        <taxon>Kitasatosporales</taxon>
        <taxon>Streptomycetaceae</taxon>
        <taxon>Streptomyces</taxon>
    </lineage>
</organism>
<sequence length="126" mass="12916">MPDITRRRAYTTAAAVAATASAAAPTAAPAATAAARHDHTAPDSFDEVYKGRRIQGGPASGGGHHHEHGGGYAVFVDGVQLHVMQNADGTWISVVSHYAPVATPRAAARAAVDELQGAPLLPFPTN</sequence>
<proteinExistence type="inferred from homology"/>
<name>TYRT_STRGB</name>